<dbReference type="EMBL" id="CR858801">
    <property type="protein sequence ID" value="CAH91006.1"/>
    <property type="molecule type" value="mRNA"/>
</dbReference>
<dbReference type="EMBL" id="CR860116">
    <property type="protein sequence ID" value="CAH92261.1"/>
    <property type="molecule type" value="mRNA"/>
</dbReference>
<dbReference type="SMR" id="Q5R7J9"/>
<dbReference type="FunCoup" id="Q5R7J9">
    <property type="interactions" value="2146"/>
</dbReference>
<dbReference type="STRING" id="9601.ENSPPYP00000004000"/>
<dbReference type="eggNOG" id="KOG0401">
    <property type="taxonomic scope" value="Eukaryota"/>
</dbReference>
<dbReference type="InParanoid" id="Q5R7J9"/>
<dbReference type="OrthoDB" id="514777at2759"/>
<dbReference type="Proteomes" id="UP000001595">
    <property type="component" value="Unplaced"/>
</dbReference>
<dbReference type="GO" id="GO:0016281">
    <property type="term" value="C:eukaryotic translation initiation factor 4F complex"/>
    <property type="evidence" value="ECO:0000250"/>
    <property type="project" value="UniProtKB"/>
</dbReference>
<dbReference type="GO" id="GO:0003729">
    <property type="term" value="F:mRNA binding"/>
    <property type="evidence" value="ECO:0007669"/>
    <property type="project" value="TreeGrafter"/>
</dbReference>
<dbReference type="GO" id="GO:0008135">
    <property type="term" value="F:translation factor activity, RNA binding"/>
    <property type="evidence" value="ECO:0000250"/>
    <property type="project" value="UniProtKB"/>
</dbReference>
<dbReference type="GO" id="GO:0003743">
    <property type="term" value="F:translation initiation factor activity"/>
    <property type="evidence" value="ECO:0000250"/>
    <property type="project" value="UniProtKB"/>
</dbReference>
<dbReference type="GO" id="GO:0006446">
    <property type="term" value="P:regulation of translational initiation"/>
    <property type="evidence" value="ECO:0000250"/>
    <property type="project" value="UniProtKB"/>
</dbReference>
<dbReference type="CDD" id="cd11559">
    <property type="entry name" value="W2_eIF4G1_like"/>
    <property type="match status" value="1"/>
</dbReference>
<dbReference type="FunFam" id="1.25.40.180:FF:000007">
    <property type="entry name" value="Eukaryotic translation initiation factor 4 gamma 2"/>
    <property type="match status" value="1"/>
</dbReference>
<dbReference type="FunFam" id="1.25.40.180:FF:000011">
    <property type="entry name" value="Eukaryotic translation initiation factor 4 gamma 2"/>
    <property type="match status" value="1"/>
</dbReference>
<dbReference type="FunFam" id="1.25.40.180:FF:000017">
    <property type="entry name" value="Eukaryotic translation initiation factor 4 gamma 2"/>
    <property type="match status" value="1"/>
</dbReference>
<dbReference type="Gene3D" id="1.25.40.180">
    <property type="match status" value="3"/>
</dbReference>
<dbReference type="InterPro" id="IPR016024">
    <property type="entry name" value="ARM-type_fold"/>
</dbReference>
<dbReference type="InterPro" id="IPR003891">
    <property type="entry name" value="Initiation_fac_eIF4g_MI"/>
</dbReference>
<dbReference type="InterPro" id="IPR003890">
    <property type="entry name" value="MIF4G-like_typ-3"/>
</dbReference>
<dbReference type="InterPro" id="IPR003307">
    <property type="entry name" value="W2_domain"/>
</dbReference>
<dbReference type="PANTHER" id="PTHR23253">
    <property type="entry name" value="EUKARYOTIC TRANSLATION INITIATION FACTOR 4 GAMMA"/>
    <property type="match status" value="1"/>
</dbReference>
<dbReference type="PANTHER" id="PTHR23253:SF9">
    <property type="entry name" value="EUKARYOTIC TRANSLATION INITIATION FACTOR 4 GAMMA 2"/>
    <property type="match status" value="1"/>
</dbReference>
<dbReference type="Pfam" id="PF02847">
    <property type="entry name" value="MA3"/>
    <property type="match status" value="1"/>
</dbReference>
<dbReference type="Pfam" id="PF02854">
    <property type="entry name" value="MIF4G"/>
    <property type="match status" value="1"/>
</dbReference>
<dbReference type="Pfam" id="PF02020">
    <property type="entry name" value="W2"/>
    <property type="match status" value="1"/>
</dbReference>
<dbReference type="SMART" id="SM00515">
    <property type="entry name" value="eIF5C"/>
    <property type="match status" value="1"/>
</dbReference>
<dbReference type="SMART" id="SM00544">
    <property type="entry name" value="MA3"/>
    <property type="match status" value="1"/>
</dbReference>
<dbReference type="SMART" id="SM00543">
    <property type="entry name" value="MIF4G"/>
    <property type="match status" value="1"/>
</dbReference>
<dbReference type="SUPFAM" id="SSF48371">
    <property type="entry name" value="ARM repeat"/>
    <property type="match status" value="3"/>
</dbReference>
<dbReference type="PROSITE" id="PS51366">
    <property type="entry name" value="MI"/>
    <property type="match status" value="1"/>
</dbReference>
<dbReference type="PROSITE" id="PS51363">
    <property type="entry name" value="W2"/>
    <property type="match status" value="1"/>
</dbReference>
<protein>
    <recommendedName>
        <fullName>Eukaryotic translation initiation factor 4 gamma 2</fullName>
        <shortName>eIF-4-gamma 2</shortName>
        <shortName>eIF-4G 2</shortName>
        <shortName>eIF4G 2</shortName>
    </recommendedName>
</protein>
<proteinExistence type="evidence at transcript level"/>
<accession>Q5R7J9</accession>
<accession>Q5RB54</accession>
<evidence type="ECO:0000250" key="1"/>
<evidence type="ECO:0000250" key="2">
    <source>
        <dbReference type="UniProtKB" id="P78344"/>
    </source>
</evidence>
<evidence type="ECO:0000255" key="3">
    <source>
        <dbReference type="PROSITE-ProRule" id="PRU00695"/>
    </source>
</evidence>
<evidence type="ECO:0000255" key="4">
    <source>
        <dbReference type="PROSITE-ProRule" id="PRU00698"/>
    </source>
</evidence>
<evidence type="ECO:0000256" key="5">
    <source>
        <dbReference type="SAM" id="MobiDB-lite"/>
    </source>
</evidence>
<evidence type="ECO:0000305" key="6"/>
<organism>
    <name type="scientific">Pongo abelii</name>
    <name type="common">Sumatran orangutan</name>
    <name type="synonym">Pongo pygmaeus abelii</name>
    <dbReference type="NCBI Taxonomy" id="9601"/>
    <lineage>
        <taxon>Eukaryota</taxon>
        <taxon>Metazoa</taxon>
        <taxon>Chordata</taxon>
        <taxon>Craniata</taxon>
        <taxon>Vertebrata</taxon>
        <taxon>Euteleostomi</taxon>
        <taxon>Mammalia</taxon>
        <taxon>Eutheria</taxon>
        <taxon>Euarchontoglires</taxon>
        <taxon>Primates</taxon>
        <taxon>Haplorrhini</taxon>
        <taxon>Catarrhini</taxon>
        <taxon>Hominidae</taxon>
        <taxon>Pongo</taxon>
    </lineage>
</organism>
<keyword id="KW-0007">Acetylation</keyword>
<keyword id="KW-0396">Initiation factor</keyword>
<keyword id="KW-1017">Isopeptide bond</keyword>
<keyword id="KW-0488">Methylation</keyword>
<keyword id="KW-0597">Phosphoprotein</keyword>
<keyword id="KW-0648">Protein biosynthesis</keyword>
<keyword id="KW-1185">Reference proteome</keyword>
<keyword id="KW-0678">Repressor</keyword>
<keyword id="KW-0810">Translation regulation</keyword>
<keyword id="KW-0832">Ubl conjugation</keyword>
<gene>
    <name type="primary">EIF4G2</name>
</gene>
<name>IF4G2_PONAB</name>
<comment type="function">
    <text evidence="1">Appears to play a role in the switch from cap-dependent to IRES-mediated translation during mitosis, apoptosis and viral infection. Cleaved by some caspases and viral proteases (By similarity).</text>
</comment>
<comment type="subunit">
    <text evidence="2">Interacts with the serine/threonine protein kinases MKNK1 and MKNK2. Binds EIF4A and EIF3. Interacts with MIF4GD (By similarity). Interacts with DAZAP2 (By similarity).</text>
</comment>
<comment type="PTM">
    <text evidence="1">Phosphorylation; hyperphosphorylated during mitosis.</text>
</comment>
<comment type="miscellaneous">
    <text evidence="1">This gene has been shown to be extensively edited in the liver of APOBEC1 transgenic animals. Its aberrant editing could contribute to the potent oncogenesis induced by overexpression of APOBEC1. The aberrant edited sequence, called NAT1, is likely to be a fundamental translational repressor (By similarity).</text>
</comment>
<comment type="similarity">
    <text evidence="6">Belongs to the eukaryotic initiation factor 4G family.</text>
</comment>
<sequence length="907" mass="102362">MESAIAEGGASRFSASSGGGGSRGAPQHYPKTAGNSEFLGKTPGQNAQKWIPARSTRRDDNSAANNSANEKERHDAIFRKVRGILNKLTPEKFDKLCLELLNVGVESKLILKGVILLIVDKALEEPKYSSLYAQLCLRLAEDAPNFDGPAAEGQPGQKQSTTFRRLLISKLQDEFENRTRNVDVYDKRENPLLPEEEEQRAIAKIKMLGNIKFIGELGKLDLIHESILHKCIKTLLEKKKRVQLKDMGEDLECLCQIMRTVGPRLDHERAKSLMDQYFARMCSLMLSKELPARIRFLLQDTVELREHHWVPRKAFLDNGPKTINQIRQDAVKDLGVFIPAPMAQGMRSDFFLEGPFMPPRMKMDRDPLGGLADMFGQMPGSGIGTGPGVIQDRFSPTMGRHRSNQLFNGHGGHIMPPTQSQFGEMGGKFMKSQGLSQLYHNQSQGLLSQLQGQSKDMPPRFSKKGQLNADEISLRPAQSFLMNKNQVPKLQPQITMIPPSAQPPRTQTPPLGQTPQLGLKTNPPLIQEKPAKTSKKPPPSKEELLKLTETVVTEYLNSGNANEAVNGVREMRAPKHFLPEMLSKVIILSLDRSDEDKEKASSLISLLKQEGIATSDNFMQAFLNVLDQCPKLEVDIPLVKSYLAQFAARAIISELVSISELAQPLESGTHFPLFLLCLQQLAKLQDREWLTELFQQSKVNMQKMLPEIDQNKDRMLEILEGKGLSFLFPLLKLEKELLKQIKLDPSPQTIYKWIKDNISPKLHVDKGFVNILMTSFLQYISSEVNPPSDETDSSSAPSKEQLEQEKQLLLSFKPVMQKFLHDHVDLQVSALYALQVHCYNSNFPKGMLLRFFVHFYDMEIIEEEAFLAWKEDITQEFPGKGKALFQVNQWLTWLETAEEEESEEEAD</sequence>
<reference key="1">
    <citation type="submission" date="2004-11" db="EMBL/GenBank/DDBJ databases">
        <authorList>
            <consortium name="The German cDNA consortium"/>
        </authorList>
    </citation>
    <scope>NUCLEOTIDE SEQUENCE [LARGE SCALE MRNA]</scope>
    <source>
        <tissue>Brain cortex</tissue>
    </source>
</reference>
<feature type="chain" id="PRO_0000316289" description="Eukaryotic translation initiation factor 4 gamma 2">
    <location>
        <begin position="1"/>
        <end position="907"/>
    </location>
</feature>
<feature type="domain" description="MIF4G" evidence="4">
    <location>
        <begin position="78"/>
        <end position="308"/>
    </location>
</feature>
<feature type="domain" description="MI" evidence="4">
    <location>
        <begin position="543"/>
        <end position="666"/>
    </location>
</feature>
<feature type="domain" description="W2" evidence="3">
    <location>
        <begin position="720"/>
        <end position="904"/>
    </location>
</feature>
<feature type="region of interest" description="Disordered" evidence="5">
    <location>
        <begin position="1"/>
        <end position="71"/>
    </location>
</feature>
<feature type="region of interest" description="Disordered" evidence="5">
    <location>
        <begin position="498"/>
        <end position="541"/>
    </location>
</feature>
<feature type="compositionally biased region" description="Polar residues" evidence="5">
    <location>
        <begin position="503"/>
        <end position="516"/>
    </location>
</feature>
<feature type="modified residue" description="N-acetylmethionine" evidence="2">
    <location>
        <position position="1"/>
    </location>
</feature>
<feature type="modified residue" description="Phosphoserine" evidence="2">
    <location>
        <position position="11"/>
    </location>
</feature>
<feature type="modified residue" description="Phosphothreonine" evidence="2">
    <location>
        <position position="89"/>
    </location>
</feature>
<feature type="modified residue" description="Omega-N-methylarginine" evidence="2">
    <location>
        <position position="360"/>
    </location>
</feature>
<feature type="modified residue" description="Phosphoserine" evidence="2">
    <location>
        <position position="395"/>
    </location>
</feature>
<feature type="modified residue" description="N6-methyllysine" evidence="2">
    <location>
        <position position="431"/>
    </location>
</feature>
<feature type="modified residue" description="Phosphoserine" evidence="2">
    <location>
        <position position="443"/>
    </location>
</feature>
<feature type="modified residue" description="Omega-N-methylarginine" evidence="2">
    <location>
        <position position="505"/>
    </location>
</feature>
<feature type="modified residue" description="Phosphothreonine" evidence="2">
    <location>
        <position position="508"/>
    </location>
</feature>
<feature type="modified residue" description="Phosphothreonine" evidence="2">
    <location>
        <position position="514"/>
    </location>
</feature>
<feature type="modified residue" description="Phosphoserine" evidence="2">
    <location>
        <position position="902"/>
    </location>
</feature>
<feature type="cross-link" description="Glycyl lysine isopeptide (Lys-Gly) (interchain with G-Cter in SUMO2)" evidence="2">
    <location>
        <position position="575"/>
    </location>
</feature>
<feature type="sequence conflict" description="In Ref. 1; CAH91006." evidence="6" ref="1">
    <original>K</original>
    <variation>E</variation>
    <location>
        <position position="41"/>
    </location>
</feature>
<feature type="sequence conflict" description="In Ref. 1; CAH91006." evidence="6" ref="1">
    <original>G</original>
    <variation>R</variation>
    <location>
        <position position="319"/>
    </location>
</feature>
<feature type="sequence conflict" description="In Ref. 1; CAH92261." evidence="6" ref="1">
    <original>M</original>
    <variation>V</variation>
    <location>
        <position position="415"/>
    </location>
</feature>
<feature type="sequence conflict" description="In Ref. 1; CAH91006." evidence="6" ref="1">
    <original>L</original>
    <variation>P</variation>
    <location>
        <position position="450"/>
    </location>
</feature>
<feature type="sequence conflict" description="In Ref. 1; CAH92261." evidence="6" ref="1">
    <original>P</original>
    <variation>S</variation>
    <location>
        <position position="844"/>
    </location>
</feature>